<reference key="1">
    <citation type="submission" date="2007-09" db="EMBL/GenBank/DDBJ databases">
        <title>Complete sequence of chromosome of Serratia proteamaculans 568.</title>
        <authorList>
            <consortium name="US DOE Joint Genome Institute"/>
            <person name="Copeland A."/>
            <person name="Lucas S."/>
            <person name="Lapidus A."/>
            <person name="Barry K."/>
            <person name="Glavina del Rio T."/>
            <person name="Dalin E."/>
            <person name="Tice H."/>
            <person name="Pitluck S."/>
            <person name="Chain P."/>
            <person name="Malfatti S."/>
            <person name="Shin M."/>
            <person name="Vergez L."/>
            <person name="Schmutz J."/>
            <person name="Larimer F."/>
            <person name="Land M."/>
            <person name="Hauser L."/>
            <person name="Kyrpides N."/>
            <person name="Kim E."/>
            <person name="Taghavi S."/>
            <person name="Newman L."/>
            <person name="Vangronsveld J."/>
            <person name="van der Lelie D."/>
            <person name="Richardson P."/>
        </authorList>
    </citation>
    <scope>NUCLEOTIDE SEQUENCE [LARGE SCALE GENOMIC DNA]</scope>
    <source>
        <strain>568</strain>
    </source>
</reference>
<protein>
    <recommendedName>
        <fullName evidence="1">Cell division protein FtsB</fullName>
    </recommendedName>
</protein>
<gene>
    <name evidence="1" type="primary">ftsB</name>
    <name type="ordered locus">Spro_0825</name>
</gene>
<evidence type="ECO:0000255" key="1">
    <source>
        <dbReference type="HAMAP-Rule" id="MF_00599"/>
    </source>
</evidence>
<feature type="chain" id="PRO_1000061248" description="Cell division protein FtsB">
    <location>
        <begin position="1"/>
        <end position="106"/>
    </location>
</feature>
<feature type="topological domain" description="Cytoplasmic" evidence="1">
    <location>
        <begin position="1"/>
        <end position="3"/>
    </location>
</feature>
<feature type="transmembrane region" description="Helical" evidence="1">
    <location>
        <begin position="4"/>
        <end position="21"/>
    </location>
</feature>
<feature type="topological domain" description="Periplasmic" evidence="1">
    <location>
        <begin position="22"/>
        <end position="106"/>
    </location>
</feature>
<feature type="coiled-coil region" evidence="1">
    <location>
        <begin position="40"/>
        <end position="62"/>
    </location>
</feature>
<comment type="function">
    <text evidence="1">Essential cell division protein. May link together the upstream cell division proteins, which are predominantly cytoplasmic, with the downstream cell division proteins, which are predominantly periplasmic.</text>
</comment>
<comment type="subunit">
    <text evidence="1">Part of a complex composed of FtsB, FtsL and FtsQ.</text>
</comment>
<comment type="subcellular location">
    <subcellularLocation>
        <location evidence="1">Cell inner membrane</location>
        <topology evidence="1">Single-pass type II membrane protein</topology>
    </subcellularLocation>
    <text evidence="1">Localizes to the division septum.</text>
</comment>
<comment type="similarity">
    <text evidence="1">Belongs to the FtsB family.</text>
</comment>
<name>FTSB_SERP5</name>
<sequence length="106" mass="11915">MGKLTLLLLALLGWLQYSLWLGKNGVHDYVRVNDDVAVQQGSNAKLKARNDQLFAEIDDLNGGQEAIEERARNELSMIKPGETFYRLVPDQSRRNAASSSQNNLQK</sequence>
<accession>A8G9Z1</accession>
<organism>
    <name type="scientific">Serratia proteamaculans (strain 568)</name>
    <dbReference type="NCBI Taxonomy" id="399741"/>
    <lineage>
        <taxon>Bacteria</taxon>
        <taxon>Pseudomonadati</taxon>
        <taxon>Pseudomonadota</taxon>
        <taxon>Gammaproteobacteria</taxon>
        <taxon>Enterobacterales</taxon>
        <taxon>Yersiniaceae</taxon>
        <taxon>Serratia</taxon>
    </lineage>
</organism>
<proteinExistence type="inferred from homology"/>
<keyword id="KW-0131">Cell cycle</keyword>
<keyword id="KW-0132">Cell division</keyword>
<keyword id="KW-0997">Cell inner membrane</keyword>
<keyword id="KW-1003">Cell membrane</keyword>
<keyword id="KW-0175">Coiled coil</keyword>
<keyword id="KW-0472">Membrane</keyword>
<keyword id="KW-0812">Transmembrane</keyword>
<keyword id="KW-1133">Transmembrane helix</keyword>
<dbReference type="EMBL" id="CP000826">
    <property type="protein sequence ID" value="ABV39931.1"/>
    <property type="molecule type" value="Genomic_DNA"/>
</dbReference>
<dbReference type="SMR" id="A8G9Z1"/>
<dbReference type="STRING" id="399741.Spro_0825"/>
<dbReference type="KEGG" id="spe:Spro_0825"/>
<dbReference type="eggNOG" id="COG2919">
    <property type="taxonomic scope" value="Bacteria"/>
</dbReference>
<dbReference type="HOGENOM" id="CLU_134863_5_2_6"/>
<dbReference type="OrthoDB" id="7061211at2"/>
<dbReference type="GO" id="GO:0032153">
    <property type="term" value="C:cell division site"/>
    <property type="evidence" value="ECO:0007669"/>
    <property type="project" value="UniProtKB-UniRule"/>
</dbReference>
<dbReference type="GO" id="GO:0030428">
    <property type="term" value="C:cell septum"/>
    <property type="evidence" value="ECO:0007669"/>
    <property type="project" value="TreeGrafter"/>
</dbReference>
<dbReference type="GO" id="GO:0005886">
    <property type="term" value="C:plasma membrane"/>
    <property type="evidence" value="ECO:0007669"/>
    <property type="project" value="UniProtKB-SubCell"/>
</dbReference>
<dbReference type="GO" id="GO:0043093">
    <property type="term" value="P:FtsZ-dependent cytokinesis"/>
    <property type="evidence" value="ECO:0007669"/>
    <property type="project" value="UniProtKB-UniRule"/>
</dbReference>
<dbReference type="Gene3D" id="1.20.5.400">
    <property type="match status" value="1"/>
</dbReference>
<dbReference type="HAMAP" id="MF_00599">
    <property type="entry name" value="FtsB"/>
    <property type="match status" value="1"/>
</dbReference>
<dbReference type="InterPro" id="IPR023081">
    <property type="entry name" value="Cell_div_FtsB"/>
</dbReference>
<dbReference type="InterPro" id="IPR007060">
    <property type="entry name" value="FtsL/DivIC"/>
</dbReference>
<dbReference type="NCBIfam" id="NF002058">
    <property type="entry name" value="PRK00888.1"/>
    <property type="match status" value="1"/>
</dbReference>
<dbReference type="PANTHER" id="PTHR37485">
    <property type="entry name" value="CELL DIVISION PROTEIN FTSB"/>
    <property type="match status" value="1"/>
</dbReference>
<dbReference type="PANTHER" id="PTHR37485:SF1">
    <property type="entry name" value="CELL DIVISION PROTEIN FTSB"/>
    <property type="match status" value="1"/>
</dbReference>
<dbReference type="Pfam" id="PF04977">
    <property type="entry name" value="DivIC"/>
    <property type="match status" value="1"/>
</dbReference>